<accession>Q7V3N7</accession>
<name>GUAA_PROMP</name>
<dbReference type="EC" id="6.3.5.2" evidence="1"/>
<dbReference type="EMBL" id="BX548174">
    <property type="protein sequence ID" value="CAE18496.1"/>
    <property type="molecule type" value="Genomic_DNA"/>
</dbReference>
<dbReference type="RefSeq" id="WP_011131675.1">
    <property type="nucleotide sequence ID" value="NC_005072.1"/>
</dbReference>
<dbReference type="SMR" id="Q7V3N7"/>
<dbReference type="STRING" id="59919.PMM0037"/>
<dbReference type="MEROPS" id="C26.957"/>
<dbReference type="KEGG" id="pmm:PMM0037"/>
<dbReference type="eggNOG" id="COG0519">
    <property type="taxonomic scope" value="Bacteria"/>
</dbReference>
<dbReference type="HOGENOM" id="CLU_014340_0_5_3"/>
<dbReference type="OrthoDB" id="9802219at2"/>
<dbReference type="UniPathway" id="UPA00189">
    <property type="reaction ID" value="UER00296"/>
</dbReference>
<dbReference type="Proteomes" id="UP000001026">
    <property type="component" value="Chromosome"/>
</dbReference>
<dbReference type="GO" id="GO:0005829">
    <property type="term" value="C:cytosol"/>
    <property type="evidence" value="ECO:0007669"/>
    <property type="project" value="TreeGrafter"/>
</dbReference>
<dbReference type="GO" id="GO:0005524">
    <property type="term" value="F:ATP binding"/>
    <property type="evidence" value="ECO:0007669"/>
    <property type="project" value="UniProtKB-UniRule"/>
</dbReference>
<dbReference type="GO" id="GO:0003921">
    <property type="term" value="F:GMP synthase activity"/>
    <property type="evidence" value="ECO:0007669"/>
    <property type="project" value="InterPro"/>
</dbReference>
<dbReference type="CDD" id="cd01742">
    <property type="entry name" value="GATase1_GMP_Synthase"/>
    <property type="match status" value="1"/>
</dbReference>
<dbReference type="CDD" id="cd01997">
    <property type="entry name" value="GMP_synthase_C"/>
    <property type="match status" value="1"/>
</dbReference>
<dbReference type="FunFam" id="3.30.300.10:FF:000002">
    <property type="entry name" value="GMP synthase [glutamine-hydrolyzing]"/>
    <property type="match status" value="1"/>
</dbReference>
<dbReference type="FunFam" id="3.40.50.620:FF:000001">
    <property type="entry name" value="GMP synthase [glutamine-hydrolyzing]"/>
    <property type="match status" value="1"/>
</dbReference>
<dbReference type="FunFam" id="3.40.50.880:FF:000001">
    <property type="entry name" value="GMP synthase [glutamine-hydrolyzing]"/>
    <property type="match status" value="1"/>
</dbReference>
<dbReference type="Gene3D" id="3.30.300.10">
    <property type="match status" value="1"/>
</dbReference>
<dbReference type="Gene3D" id="3.40.50.880">
    <property type="match status" value="1"/>
</dbReference>
<dbReference type="Gene3D" id="3.40.50.620">
    <property type="entry name" value="HUPs"/>
    <property type="match status" value="1"/>
</dbReference>
<dbReference type="HAMAP" id="MF_00344">
    <property type="entry name" value="GMP_synthase"/>
    <property type="match status" value="1"/>
</dbReference>
<dbReference type="InterPro" id="IPR029062">
    <property type="entry name" value="Class_I_gatase-like"/>
</dbReference>
<dbReference type="InterPro" id="IPR017926">
    <property type="entry name" value="GATASE"/>
</dbReference>
<dbReference type="InterPro" id="IPR001674">
    <property type="entry name" value="GMP_synth_C"/>
</dbReference>
<dbReference type="InterPro" id="IPR004739">
    <property type="entry name" value="GMP_synth_GATase"/>
</dbReference>
<dbReference type="InterPro" id="IPR022955">
    <property type="entry name" value="GMP_synthase"/>
</dbReference>
<dbReference type="InterPro" id="IPR025777">
    <property type="entry name" value="GMPS_ATP_PPase_dom"/>
</dbReference>
<dbReference type="InterPro" id="IPR014729">
    <property type="entry name" value="Rossmann-like_a/b/a_fold"/>
</dbReference>
<dbReference type="NCBIfam" id="TIGR00884">
    <property type="entry name" value="guaA_Cterm"/>
    <property type="match status" value="1"/>
</dbReference>
<dbReference type="NCBIfam" id="TIGR00888">
    <property type="entry name" value="guaA_Nterm"/>
    <property type="match status" value="1"/>
</dbReference>
<dbReference type="NCBIfam" id="NF000848">
    <property type="entry name" value="PRK00074.1"/>
    <property type="match status" value="1"/>
</dbReference>
<dbReference type="PANTHER" id="PTHR11922:SF2">
    <property type="entry name" value="GMP SYNTHASE [GLUTAMINE-HYDROLYZING]"/>
    <property type="match status" value="1"/>
</dbReference>
<dbReference type="PANTHER" id="PTHR11922">
    <property type="entry name" value="GMP SYNTHASE-RELATED"/>
    <property type="match status" value="1"/>
</dbReference>
<dbReference type="Pfam" id="PF00117">
    <property type="entry name" value="GATase"/>
    <property type="match status" value="1"/>
</dbReference>
<dbReference type="Pfam" id="PF00958">
    <property type="entry name" value="GMP_synt_C"/>
    <property type="match status" value="1"/>
</dbReference>
<dbReference type="PRINTS" id="PR00097">
    <property type="entry name" value="ANTSNTHASEII"/>
</dbReference>
<dbReference type="PRINTS" id="PR00099">
    <property type="entry name" value="CPSGATASE"/>
</dbReference>
<dbReference type="PRINTS" id="PR00096">
    <property type="entry name" value="GATASE"/>
</dbReference>
<dbReference type="SUPFAM" id="SSF52402">
    <property type="entry name" value="Adenine nucleotide alpha hydrolases-like"/>
    <property type="match status" value="1"/>
</dbReference>
<dbReference type="SUPFAM" id="SSF52317">
    <property type="entry name" value="Class I glutamine amidotransferase-like"/>
    <property type="match status" value="1"/>
</dbReference>
<dbReference type="SUPFAM" id="SSF54810">
    <property type="entry name" value="GMP synthetase C-terminal dimerisation domain"/>
    <property type="match status" value="1"/>
</dbReference>
<dbReference type="PROSITE" id="PS51273">
    <property type="entry name" value="GATASE_TYPE_1"/>
    <property type="match status" value="1"/>
</dbReference>
<dbReference type="PROSITE" id="PS51553">
    <property type="entry name" value="GMPS_ATP_PPASE"/>
    <property type="match status" value="1"/>
</dbReference>
<feature type="chain" id="PRO_0000140161" description="GMP synthase [glutamine-hydrolyzing]">
    <location>
        <begin position="1"/>
        <end position="528"/>
    </location>
</feature>
<feature type="domain" description="Glutamine amidotransferase type-1" evidence="1">
    <location>
        <begin position="13"/>
        <end position="204"/>
    </location>
</feature>
<feature type="domain" description="GMPS ATP-PPase" evidence="1">
    <location>
        <begin position="205"/>
        <end position="403"/>
    </location>
</feature>
<feature type="active site" description="Nucleophile" evidence="1">
    <location>
        <position position="90"/>
    </location>
</feature>
<feature type="active site" evidence="1">
    <location>
        <position position="178"/>
    </location>
</feature>
<feature type="active site" evidence="1">
    <location>
        <position position="180"/>
    </location>
</feature>
<feature type="binding site" evidence="1">
    <location>
        <begin position="232"/>
        <end position="238"/>
    </location>
    <ligand>
        <name>ATP</name>
        <dbReference type="ChEBI" id="CHEBI:30616"/>
    </ligand>
</feature>
<reference key="1">
    <citation type="journal article" date="2003" name="Nature">
        <title>Genome divergence in two Prochlorococcus ecotypes reflects oceanic niche differentiation.</title>
        <authorList>
            <person name="Rocap G."/>
            <person name="Larimer F.W."/>
            <person name="Lamerdin J.E."/>
            <person name="Malfatti S."/>
            <person name="Chain P."/>
            <person name="Ahlgren N.A."/>
            <person name="Arellano A."/>
            <person name="Coleman M."/>
            <person name="Hauser L."/>
            <person name="Hess W.R."/>
            <person name="Johnson Z.I."/>
            <person name="Land M.L."/>
            <person name="Lindell D."/>
            <person name="Post A.F."/>
            <person name="Regala W."/>
            <person name="Shah M."/>
            <person name="Shaw S.L."/>
            <person name="Steglich C."/>
            <person name="Sullivan M.B."/>
            <person name="Ting C.S."/>
            <person name="Tolonen A."/>
            <person name="Webb E.A."/>
            <person name="Zinser E.R."/>
            <person name="Chisholm S.W."/>
        </authorList>
    </citation>
    <scope>NUCLEOTIDE SEQUENCE [LARGE SCALE GENOMIC DNA]</scope>
    <source>
        <strain>CCMP1986 / NIES-2087 / MED4</strain>
    </source>
</reference>
<comment type="function">
    <text evidence="1">Catalyzes the synthesis of GMP from XMP.</text>
</comment>
<comment type="catalytic activity">
    <reaction evidence="1">
        <text>XMP + L-glutamine + ATP + H2O = GMP + L-glutamate + AMP + diphosphate + 2 H(+)</text>
        <dbReference type="Rhea" id="RHEA:11680"/>
        <dbReference type="ChEBI" id="CHEBI:15377"/>
        <dbReference type="ChEBI" id="CHEBI:15378"/>
        <dbReference type="ChEBI" id="CHEBI:29985"/>
        <dbReference type="ChEBI" id="CHEBI:30616"/>
        <dbReference type="ChEBI" id="CHEBI:33019"/>
        <dbReference type="ChEBI" id="CHEBI:57464"/>
        <dbReference type="ChEBI" id="CHEBI:58115"/>
        <dbReference type="ChEBI" id="CHEBI:58359"/>
        <dbReference type="ChEBI" id="CHEBI:456215"/>
        <dbReference type="EC" id="6.3.5.2"/>
    </reaction>
</comment>
<comment type="pathway">
    <text evidence="1">Purine metabolism; GMP biosynthesis; GMP from XMP (L-Gln route): step 1/1.</text>
</comment>
<comment type="subunit">
    <text evidence="1">Homodimer.</text>
</comment>
<evidence type="ECO:0000255" key="1">
    <source>
        <dbReference type="HAMAP-Rule" id="MF_00344"/>
    </source>
</evidence>
<proteinExistence type="inferred from homology"/>
<gene>
    <name evidence="1" type="primary">guaA</name>
    <name type="ordered locus">PMM0037</name>
</gene>
<protein>
    <recommendedName>
        <fullName evidence="1">GMP synthase [glutamine-hydrolyzing]</fullName>
        <ecNumber evidence="1">6.3.5.2</ecNumber>
    </recommendedName>
    <alternativeName>
        <fullName evidence="1">GMP synthetase</fullName>
    </alternativeName>
    <alternativeName>
        <fullName evidence="1">Glutamine amidotransferase</fullName>
    </alternativeName>
</protein>
<organism>
    <name type="scientific">Prochlorococcus marinus subsp. pastoris (strain CCMP1986 / NIES-2087 / MED4)</name>
    <dbReference type="NCBI Taxonomy" id="59919"/>
    <lineage>
        <taxon>Bacteria</taxon>
        <taxon>Bacillati</taxon>
        <taxon>Cyanobacteriota</taxon>
        <taxon>Cyanophyceae</taxon>
        <taxon>Synechococcales</taxon>
        <taxon>Prochlorococcaceae</taxon>
        <taxon>Prochlorococcus</taxon>
    </lineage>
</organism>
<keyword id="KW-0067">ATP-binding</keyword>
<keyword id="KW-0315">Glutamine amidotransferase</keyword>
<keyword id="KW-0332">GMP biosynthesis</keyword>
<keyword id="KW-0436">Ligase</keyword>
<keyword id="KW-0547">Nucleotide-binding</keyword>
<keyword id="KW-0658">Purine biosynthesis</keyword>
<sequence length="528" mass="59598">MSKKLLKKERDPSILILDFGSQYSELIARRIREADVFSLVVSNFTSVKEIQDINPKGIILSGGPSSVYEDNAPKCDAKIFDLGIPILGICYGMQLMVKELGGEVTPAINKAEYGRAPINIDCESDLLSNVQDKSIMWMSHGDSINNLPEGFIKISHTENTLHAAISNKQKKLFGVQFHPEVIHSEFGMTVIKNFVYSIAKCKADWTTETFLEETIPRIKQQVGDKRVLLALSGGVDSSTLAFLLNKAIGKKLTCMFIDQGFMRKGEPEFLMEFFDKKFHIKVEYINARERFIDKLNGITDPEEKRKIIGREFIRVFEEESNRLGPFQYLAQGTLYPDVIESAGTNLDPKTGERIAVKIKSHHNVGGLPKDLQFKLVEPLRKLFKDEVRKVGGALGLPDEIIKRHPFPGPGLAIRILGDVSHEKLNCLRDADWIVRDEIKKAGLYNDIWQAFAVLLPVKTVGVMGDKRTYAWPIVLRCVSSEDGMTADWSRIPYETLERISNRIVNEVEQVNRVVFDITSKPPGTIEWE</sequence>